<dbReference type="EMBL" id="CU329672">
    <property type="protein sequence ID" value="CAA22487.1"/>
    <property type="molecule type" value="Genomic_DNA"/>
</dbReference>
<dbReference type="PIR" id="T41033">
    <property type="entry name" value="T41033"/>
</dbReference>
<dbReference type="RefSeq" id="NP_588461.1">
    <property type="nucleotide sequence ID" value="NM_001023452.2"/>
</dbReference>
<dbReference type="STRING" id="284812.O94410"/>
<dbReference type="PaxDb" id="4896-SPCC1620.03.1"/>
<dbReference type="EnsemblFungi" id="SPCC1620.03.1">
    <property type="protein sequence ID" value="SPCC1620.03.1:pep"/>
    <property type="gene ID" value="SPCC1620.03"/>
</dbReference>
<dbReference type="GeneID" id="2538805"/>
<dbReference type="KEGG" id="spo:2538805"/>
<dbReference type="PomBase" id="SPCC1620.03">
    <property type="gene designation" value="mug163"/>
</dbReference>
<dbReference type="VEuPathDB" id="FungiDB:SPCC1620.03"/>
<dbReference type="HOGENOM" id="CLU_120607_0_0_1"/>
<dbReference type="InParanoid" id="O94410"/>
<dbReference type="OMA" id="DEYDCIF"/>
<dbReference type="PRO" id="PR:O94410"/>
<dbReference type="Proteomes" id="UP000002485">
    <property type="component" value="Chromosome III"/>
</dbReference>
<dbReference type="GO" id="GO:0005739">
    <property type="term" value="C:mitochondrion"/>
    <property type="evidence" value="ECO:0007005"/>
    <property type="project" value="PomBase"/>
</dbReference>
<dbReference type="GO" id="GO:0051321">
    <property type="term" value="P:meiotic cell cycle"/>
    <property type="evidence" value="ECO:0007669"/>
    <property type="project" value="UniProtKB-KW"/>
</dbReference>
<dbReference type="InterPro" id="IPR031342">
    <property type="entry name" value="Mug163-like"/>
</dbReference>
<dbReference type="Pfam" id="PF17119">
    <property type="entry name" value="MMU163"/>
    <property type="match status" value="1"/>
</dbReference>
<evidence type="ECO:0000269" key="1">
    <source>
    </source>
</evidence>
<evidence type="ECO:0000269" key="2">
    <source>
    </source>
</evidence>
<comment type="function">
    <text evidence="1">Has a role in meiosis.</text>
</comment>
<comment type="subcellular location">
    <subcellularLocation>
        <location evidence="2">Mitochondrion</location>
    </subcellularLocation>
</comment>
<feature type="chain" id="PRO_0000278513" description="Meiotically up-regulated gene 163 protein">
    <location>
        <begin position="1"/>
        <end position="186"/>
    </location>
</feature>
<gene>
    <name type="primary">mug163</name>
    <name type="ORF">SPCC1620.03</name>
</gene>
<name>MU163_SCHPO</name>
<keyword id="KW-0469">Meiosis</keyword>
<keyword id="KW-0496">Mitochondrion</keyword>
<keyword id="KW-1185">Reference proteome</keyword>
<sequence>MPFMNFRNFNFMPLLRPLNPVYKGAEHLCRKNIHNQVYNVETGKTIQILQDLVPLVLYRALPDAILDHHVELVIFPNSLNFPRIEGLTIYKFIFKTARLLLSSTYGSSAKRPIDIIHQLHSSMENKNVRYSMKCNWIASPNDEYTWVFHFDIDKKGIIYRHIIDNLERNRSRQCEKISALKPDPIE</sequence>
<organism>
    <name type="scientific">Schizosaccharomyces pombe (strain 972 / ATCC 24843)</name>
    <name type="common">Fission yeast</name>
    <dbReference type="NCBI Taxonomy" id="284812"/>
    <lineage>
        <taxon>Eukaryota</taxon>
        <taxon>Fungi</taxon>
        <taxon>Dikarya</taxon>
        <taxon>Ascomycota</taxon>
        <taxon>Taphrinomycotina</taxon>
        <taxon>Schizosaccharomycetes</taxon>
        <taxon>Schizosaccharomycetales</taxon>
        <taxon>Schizosaccharomycetaceae</taxon>
        <taxon>Schizosaccharomyces</taxon>
    </lineage>
</organism>
<accession>O94410</accession>
<proteinExistence type="evidence at protein level"/>
<reference key="1">
    <citation type="journal article" date="2002" name="Nature">
        <title>The genome sequence of Schizosaccharomyces pombe.</title>
        <authorList>
            <person name="Wood V."/>
            <person name="Gwilliam R."/>
            <person name="Rajandream M.A."/>
            <person name="Lyne M.H."/>
            <person name="Lyne R."/>
            <person name="Stewart A."/>
            <person name="Sgouros J.G."/>
            <person name="Peat N."/>
            <person name="Hayles J."/>
            <person name="Baker S.G."/>
            <person name="Basham D."/>
            <person name="Bowman S."/>
            <person name="Brooks K."/>
            <person name="Brown D."/>
            <person name="Brown S."/>
            <person name="Chillingworth T."/>
            <person name="Churcher C.M."/>
            <person name="Collins M."/>
            <person name="Connor R."/>
            <person name="Cronin A."/>
            <person name="Davis P."/>
            <person name="Feltwell T."/>
            <person name="Fraser A."/>
            <person name="Gentles S."/>
            <person name="Goble A."/>
            <person name="Hamlin N."/>
            <person name="Harris D.E."/>
            <person name="Hidalgo J."/>
            <person name="Hodgson G."/>
            <person name="Holroyd S."/>
            <person name="Hornsby T."/>
            <person name="Howarth S."/>
            <person name="Huckle E.J."/>
            <person name="Hunt S."/>
            <person name="Jagels K."/>
            <person name="James K.D."/>
            <person name="Jones L."/>
            <person name="Jones M."/>
            <person name="Leather S."/>
            <person name="McDonald S."/>
            <person name="McLean J."/>
            <person name="Mooney P."/>
            <person name="Moule S."/>
            <person name="Mungall K.L."/>
            <person name="Murphy L.D."/>
            <person name="Niblett D."/>
            <person name="Odell C."/>
            <person name="Oliver K."/>
            <person name="O'Neil S."/>
            <person name="Pearson D."/>
            <person name="Quail M.A."/>
            <person name="Rabbinowitsch E."/>
            <person name="Rutherford K.M."/>
            <person name="Rutter S."/>
            <person name="Saunders D."/>
            <person name="Seeger K."/>
            <person name="Sharp S."/>
            <person name="Skelton J."/>
            <person name="Simmonds M.N."/>
            <person name="Squares R."/>
            <person name="Squares S."/>
            <person name="Stevens K."/>
            <person name="Taylor K."/>
            <person name="Taylor R.G."/>
            <person name="Tivey A."/>
            <person name="Walsh S.V."/>
            <person name="Warren T."/>
            <person name="Whitehead S."/>
            <person name="Woodward J.R."/>
            <person name="Volckaert G."/>
            <person name="Aert R."/>
            <person name="Robben J."/>
            <person name="Grymonprez B."/>
            <person name="Weltjens I."/>
            <person name="Vanstreels E."/>
            <person name="Rieger M."/>
            <person name="Schaefer M."/>
            <person name="Mueller-Auer S."/>
            <person name="Gabel C."/>
            <person name="Fuchs M."/>
            <person name="Duesterhoeft A."/>
            <person name="Fritzc C."/>
            <person name="Holzer E."/>
            <person name="Moestl D."/>
            <person name="Hilbert H."/>
            <person name="Borzym K."/>
            <person name="Langer I."/>
            <person name="Beck A."/>
            <person name="Lehrach H."/>
            <person name="Reinhardt R."/>
            <person name="Pohl T.M."/>
            <person name="Eger P."/>
            <person name="Zimmermann W."/>
            <person name="Wedler H."/>
            <person name="Wambutt R."/>
            <person name="Purnelle B."/>
            <person name="Goffeau A."/>
            <person name="Cadieu E."/>
            <person name="Dreano S."/>
            <person name="Gloux S."/>
            <person name="Lelaure V."/>
            <person name="Mottier S."/>
            <person name="Galibert F."/>
            <person name="Aves S.J."/>
            <person name="Xiang Z."/>
            <person name="Hunt C."/>
            <person name="Moore K."/>
            <person name="Hurst S.M."/>
            <person name="Lucas M."/>
            <person name="Rochet M."/>
            <person name="Gaillardin C."/>
            <person name="Tallada V.A."/>
            <person name="Garzon A."/>
            <person name="Thode G."/>
            <person name="Daga R.R."/>
            <person name="Cruzado L."/>
            <person name="Jimenez J."/>
            <person name="Sanchez M."/>
            <person name="del Rey F."/>
            <person name="Benito J."/>
            <person name="Dominguez A."/>
            <person name="Revuelta J.L."/>
            <person name="Moreno S."/>
            <person name="Armstrong J."/>
            <person name="Forsburg S.L."/>
            <person name="Cerutti L."/>
            <person name="Lowe T."/>
            <person name="McCombie W.R."/>
            <person name="Paulsen I."/>
            <person name="Potashkin J."/>
            <person name="Shpakovski G.V."/>
            <person name="Ussery D."/>
            <person name="Barrell B.G."/>
            <person name="Nurse P."/>
        </authorList>
    </citation>
    <scope>NUCLEOTIDE SEQUENCE [LARGE SCALE GENOMIC DNA]</scope>
    <source>
        <strain>972 / ATCC 24843</strain>
    </source>
</reference>
<reference key="2">
    <citation type="journal article" date="2005" name="Curr. Biol.">
        <title>A large-scale screen in S. pombe identifies seven novel genes required for critical meiotic events.</title>
        <authorList>
            <person name="Martin-Castellanos C."/>
            <person name="Blanco M."/>
            <person name="Rozalen A.E."/>
            <person name="Perez-Hidalgo L."/>
            <person name="Garcia A.I."/>
            <person name="Conde F."/>
            <person name="Mata J."/>
            <person name="Ellermeier C."/>
            <person name="Davis L."/>
            <person name="San-Segundo P."/>
            <person name="Smith G.R."/>
            <person name="Moreno S."/>
        </authorList>
    </citation>
    <scope>FUNCTION IN MEIOSIS</scope>
</reference>
<reference key="3">
    <citation type="journal article" date="2006" name="Nat. Biotechnol.">
        <title>ORFeome cloning and global analysis of protein localization in the fission yeast Schizosaccharomyces pombe.</title>
        <authorList>
            <person name="Matsuyama A."/>
            <person name="Arai R."/>
            <person name="Yashiroda Y."/>
            <person name="Shirai A."/>
            <person name="Kamata A."/>
            <person name="Sekido S."/>
            <person name="Kobayashi Y."/>
            <person name="Hashimoto A."/>
            <person name="Hamamoto M."/>
            <person name="Hiraoka Y."/>
            <person name="Horinouchi S."/>
            <person name="Yoshida M."/>
        </authorList>
    </citation>
    <scope>SUBCELLULAR LOCATION [LARGE SCALE ANALYSIS]</scope>
</reference>
<protein>
    <recommendedName>
        <fullName>Meiotically up-regulated gene 163 protein</fullName>
    </recommendedName>
</protein>